<protein>
    <recommendedName>
        <fullName>Carbamoyl phosphate synthase arginine-specific small chain</fullName>
        <shortName>CPS</shortName>
        <shortName>CPSase</shortName>
        <ecNumber evidence="1">6.3.5.5</ecNumber>
    </recommendedName>
    <alternativeName>
        <fullName>Arginine-specific carbamoyl phosphate synthetase, glutamine chain</fullName>
    </alternativeName>
    <alternativeName>
        <fullName>Glutamine-dependent carbamoyl phosphate synthetase</fullName>
    </alternativeName>
</protein>
<sequence length="455" mass="49703">MFARFCKAIPAKGRAFPSVNASIQSRLMATVRNQRVPHERATFTIRDGPIFHGKSFGARTNISGEAVFTTSLVGYPESLTDPSYRGQILVFTQPLIGNYGVPSAERDQHGLLKYFESPHLQAAGVVVADVAEQYSHWTAVESLGEWCAREGVPAISGVDTRAIVTYLREQGSSLARITVGEEYDADQDEAFTDPEQIHLVRQVSTKAPFHVSAADPQCHVAVIDCGVKENILRSLVSRGASITVFPFDYPIHKVAHHFDGVFISNGPGDPTHCQDTTYHLRRLMETSQVPIFGICLGHQLLALAAGARTIKLKYGNRAHNIPALDMSTGRCHITSQNHGYAVDVDTLPSDWKPYFVNLNDSSNEGMIHKSRPIFSTQFHPEAKGGPLDSSYLFDIYIDSVRKYKANQAAFHPQRDSIPSPLLVDLLAKERVGVQPTIGMQNVQAAAAAAAVAAAA</sequence>
<name>CARA_ASPCL</name>
<proteinExistence type="inferred from homology"/>
<dbReference type="EC" id="6.3.5.5" evidence="1"/>
<dbReference type="EMBL" id="DS027049">
    <property type="protein sequence ID" value="EAW12586.1"/>
    <property type="molecule type" value="Genomic_DNA"/>
</dbReference>
<dbReference type="RefSeq" id="XP_001274012.1">
    <property type="nucleotide sequence ID" value="XM_001274011.1"/>
</dbReference>
<dbReference type="SMR" id="A1CA18"/>
<dbReference type="STRING" id="344612.A1CA18"/>
<dbReference type="EnsemblFungi" id="EAW12586">
    <property type="protein sequence ID" value="EAW12586"/>
    <property type="gene ID" value="ACLA_010090"/>
</dbReference>
<dbReference type="GeneID" id="4706589"/>
<dbReference type="KEGG" id="act:ACLA_010090"/>
<dbReference type="VEuPathDB" id="FungiDB:ACLA_010090"/>
<dbReference type="eggNOG" id="KOG0370">
    <property type="taxonomic scope" value="Eukaryota"/>
</dbReference>
<dbReference type="HOGENOM" id="CLU_035901_1_0_1"/>
<dbReference type="OMA" id="CFSVQYH"/>
<dbReference type="OrthoDB" id="434at2759"/>
<dbReference type="UniPathway" id="UPA00068">
    <property type="reaction ID" value="UER00171"/>
</dbReference>
<dbReference type="Proteomes" id="UP000006701">
    <property type="component" value="Unassembled WGS sequence"/>
</dbReference>
<dbReference type="GO" id="GO:0005951">
    <property type="term" value="C:carbamoyl-phosphate synthase complex"/>
    <property type="evidence" value="ECO:0007669"/>
    <property type="project" value="EnsemblFungi"/>
</dbReference>
<dbReference type="GO" id="GO:0005759">
    <property type="term" value="C:mitochondrial matrix"/>
    <property type="evidence" value="ECO:0007669"/>
    <property type="project" value="UniProtKB-SubCell"/>
</dbReference>
<dbReference type="GO" id="GO:0005524">
    <property type="term" value="F:ATP binding"/>
    <property type="evidence" value="ECO:0007669"/>
    <property type="project" value="UniProtKB-KW"/>
</dbReference>
<dbReference type="GO" id="GO:0004088">
    <property type="term" value="F:carbamoyl-phosphate synthase (glutamine-hydrolyzing) activity"/>
    <property type="evidence" value="ECO:0007669"/>
    <property type="project" value="UniProtKB-EC"/>
</dbReference>
<dbReference type="GO" id="GO:0004359">
    <property type="term" value="F:glutaminase activity"/>
    <property type="evidence" value="ECO:0007669"/>
    <property type="project" value="RHEA"/>
</dbReference>
<dbReference type="GO" id="GO:0006207">
    <property type="term" value="P:'de novo' pyrimidine nucleobase biosynthetic process"/>
    <property type="evidence" value="ECO:0007669"/>
    <property type="project" value="InterPro"/>
</dbReference>
<dbReference type="GO" id="GO:0006541">
    <property type="term" value="P:glutamine metabolic process"/>
    <property type="evidence" value="ECO:0007669"/>
    <property type="project" value="InterPro"/>
</dbReference>
<dbReference type="GO" id="GO:0006526">
    <property type="term" value="P:L-arginine biosynthetic process"/>
    <property type="evidence" value="ECO:0007669"/>
    <property type="project" value="UniProtKB-UniPathway"/>
</dbReference>
<dbReference type="GO" id="GO:0006221">
    <property type="term" value="P:pyrimidine nucleotide biosynthetic process"/>
    <property type="evidence" value="ECO:0007669"/>
    <property type="project" value="EnsemblFungi"/>
</dbReference>
<dbReference type="CDD" id="cd01744">
    <property type="entry name" value="GATase1_CPSase"/>
    <property type="match status" value="1"/>
</dbReference>
<dbReference type="FunFam" id="3.40.50.880:FF:000016">
    <property type="entry name" value="Carbamoyl-phosphate synthase arginine-specific small chain"/>
    <property type="match status" value="1"/>
</dbReference>
<dbReference type="FunFam" id="3.50.30.20:FF:000003">
    <property type="entry name" value="Carbamoyl-phosphate synthase arginine-specific small chain"/>
    <property type="match status" value="1"/>
</dbReference>
<dbReference type="Gene3D" id="3.40.50.880">
    <property type="match status" value="1"/>
</dbReference>
<dbReference type="Gene3D" id="3.50.30.20">
    <property type="entry name" value="Carbamoyl-phosphate synthase small subunit, N-terminal domain"/>
    <property type="match status" value="1"/>
</dbReference>
<dbReference type="HAMAP" id="MF_01209">
    <property type="entry name" value="CPSase_S_chain"/>
    <property type="match status" value="1"/>
</dbReference>
<dbReference type="InterPro" id="IPR006274">
    <property type="entry name" value="CarbamoylP_synth_ssu"/>
</dbReference>
<dbReference type="InterPro" id="IPR002474">
    <property type="entry name" value="CarbamoylP_synth_ssu_N"/>
</dbReference>
<dbReference type="InterPro" id="IPR036480">
    <property type="entry name" value="CarbP_synth_ssu_N_sf"/>
</dbReference>
<dbReference type="InterPro" id="IPR029062">
    <property type="entry name" value="Class_I_gatase-like"/>
</dbReference>
<dbReference type="InterPro" id="IPR035686">
    <property type="entry name" value="CPSase_GATase1"/>
</dbReference>
<dbReference type="InterPro" id="IPR017926">
    <property type="entry name" value="GATASE"/>
</dbReference>
<dbReference type="NCBIfam" id="TIGR01368">
    <property type="entry name" value="CPSaseIIsmall"/>
    <property type="match status" value="1"/>
</dbReference>
<dbReference type="NCBIfam" id="NF009475">
    <property type="entry name" value="PRK12838.1"/>
    <property type="match status" value="1"/>
</dbReference>
<dbReference type="PANTHER" id="PTHR11405:SF4">
    <property type="entry name" value="CARBAMOYL-PHOSPHATE SYNTHASE ARGININE-SPECIFIC SMALL CHAIN"/>
    <property type="match status" value="1"/>
</dbReference>
<dbReference type="PANTHER" id="PTHR11405">
    <property type="entry name" value="CARBAMOYLTRANSFERASE FAMILY MEMBER"/>
    <property type="match status" value="1"/>
</dbReference>
<dbReference type="Pfam" id="PF00988">
    <property type="entry name" value="CPSase_sm_chain"/>
    <property type="match status" value="1"/>
</dbReference>
<dbReference type="Pfam" id="PF00117">
    <property type="entry name" value="GATase"/>
    <property type="match status" value="1"/>
</dbReference>
<dbReference type="PRINTS" id="PR00097">
    <property type="entry name" value="ANTSNTHASEII"/>
</dbReference>
<dbReference type="PRINTS" id="PR00099">
    <property type="entry name" value="CPSGATASE"/>
</dbReference>
<dbReference type="PRINTS" id="PR00096">
    <property type="entry name" value="GATASE"/>
</dbReference>
<dbReference type="SMART" id="SM01097">
    <property type="entry name" value="CPSase_sm_chain"/>
    <property type="match status" value="1"/>
</dbReference>
<dbReference type="SUPFAM" id="SSF52021">
    <property type="entry name" value="Carbamoyl phosphate synthetase, small subunit N-terminal domain"/>
    <property type="match status" value="1"/>
</dbReference>
<dbReference type="SUPFAM" id="SSF52317">
    <property type="entry name" value="Class I glutamine amidotransferase-like"/>
    <property type="match status" value="1"/>
</dbReference>
<dbReference type="PROSITE" id="PS51273">
    <property type="entry name" value="GATASE_TYPE_1"/>
    <property type="match status" value="1"/>
</dbReference>
<gene>
    <name type="primary">cpa1</name>
    <name type="ORF">ACLA_010090</name>
</gene>
<accession>A1CA18</accession>
<feature type="transit peptide" description="Mitochondrion" evidence="2">
    <location>
        <begin position="1"/>
        <end position="28"/>
    </location>
</feature>
<feature type="chain" id="PRO_0000290586" description="Carbamoyl phosphate synthase arginine-specific small chain" evidence="2">
    <location>
        <begin position="29"/>
        <end position="455"/>
    </location>
</feature>
<feature type="domain" description="Glutamine amidotransferase type-1" evidence="3">
    <location>
        <begin position="219"/>
        <end position="406"/>
    </location>
</feature>
<feature type="active site" description="Nucleophile" evidence="3">
    <location>
        <position position="295"/>
    </location>
</feature>
<feature type="active site" evidence="3">
    <location>
        <position position="379"/>
    </location>
</feature>
<feature type="active site" evidence="3">
    <location>
        <position position="381"/>
    </location>
</feature>
<reference key="1">
    <citation type="journal article" date="2008" name="PLoS Genet.">
        <title>Genomic islands in the pathogenic filamentous fungus Aspergillus fumigatus.</title>
        <authorList>
            <person name="Fedorova N.D."/>
            <person name="Khaldi N."/>
            <person name="Joardar V.S."/>
            <person name="Maiti R."/>
            <person name="Amedeo P."/>
            <person name="Anderson M.J."/>
            <person name="Crabtree J."/>
            <person name="Silva J.C."/>
            <person name="Badger J.H."/>
            <person name="Albarraq A."/>
            <person name="Angiuoli S."/>
            <person name="Bussey H."/>
            <person name="Bowyer P."/>
            <person name="Cotty P.J."/>
            <person name="Dyer P.S."/>
            <person name="Egan A."/>
            <person name="Galens K."/>
            <person name="Fraser-Liggett C.M."/>
            <person name="Haas B.J."/>
            <person name="Inman J.M."/>
            <person name="Kent R."/>
            <person name="Lemieux S."/>
            <person name="Malavazi I."/>
            <person name="Orvis J."/>
            <person name="Roemer T."/>
            <person name="Ronning C.M."/>
            <person name="Sundaram J.P."/>
            <person name="Sutton G."/>
            <person name="Turner G."/>
            <person name="Venter J.C."/>
            <person name="White O.R."/>
            <person name="Whitty B.R."/>
            <person name="Youngman P."/>
            <person name="Wolfe K.H."/>
            <person name="Goldman G.H."/>
            <person name="Wortman J.R."/>
            <person name="Jiang B."/>
            <person name="Denning D.W."/>
            <person name="Nierman W.C."/>
        </authorList>
    </citation>
    <scope>NUCLEOTIDE SEQUENCE [LARGE SCALE GENOMIC DNA]</scope>
    <source>
        <strain>ATCC 1007 / CBS 513.65 / DSM 816 / NCTC 3887 / NRRL 1 / QM 1276 / 107</strain>
    </source>
</reference>
<evidence type="ECO:0000250" key="1">
    <source>
        <dbReference type="UniProtKB" id="P22572"/>
    </source>
</evidence>
<evidence type="ECO:0000255" key="2"/>
<evidence type="ECO:0000255" key="3">
    <source>
        <dbReference type="PROSITE-ProRule" id="PRU00605"/>
    </source>
</evidence>
<evidence type="ECO:0000305" key="4"/>
<organism>
    <name type="scientific">Aspergillus clavatus (strain ATCC 1007 / CBS 513.65 / DSM 816 / NCTC 3887 / NRRL 1 / QM 1276 / 107)</name>
    <dbReference type="NCBI Taxonomy" id="344612"/>
    <lineage>
        <taxon>Eukaryota</taxon>
        <taxon>Fungi</taxon>
        <taxon>Dikarya</taxon>
        <taxon>Ascomycota</taxon>
        <taxon>Pezizomycotina</taxon>
        <taxon>Eurotiomycetes</taxon>
        <taxon>Eurotiomycetidae</taxon>
        <taxon>Eurotiales</taxon>
        <taxon>Aspergillaceae</taxon>
        <taxon>Aspergillus</taxon>
        <taxon>Aspergillus subgen. Fumigati</taxon>
    </lineage>
</organism>
<keyword id="KW-0028">Amino-acid biosynthesis</keyword>
<keyword id="KW-0055">Arginine biosynthesis</keyword>
<keyword id="KW-0067">ATP-binding</keyword>
<keyword id="KW-0315">Glutamine amidotransferase</keyword>
<keyword id="KW-0436">Ligase</keyword>
<keyword id="KW-0496">Mitochondrion</keyword>
<keyword id="KW-0547">Nucleotide-binding</keyword>
<keyword id="KW-1185">Reference proteome</keyword>
<keyword id="KW-0809">Transit peptide</keyword>
<comment type="function">
    <text evidence="1">Small subunit of the arginine-specific carbamoyl phosphate synthase (CPSase). CPSase catalyzes the formation of carbamoyl phosphate from the ammonia moiety of glutamine, carbonate, and phosphate donated by ATP, the first step of the arginine biosynthetic pathway. The small subunit (glutamine amidotransferase) binds and cleaves glutamine to supply the large subunit with the substrate ammonia.</text>
</comment>
<comment type="catalytic activity">
    <reaction evidence="1">
        <text>hydrogencarbonate + L-glutamine + 2 ATP + H2O = carbamoyl phosphate + L-glutamate + 2 ADP + phosphate + 2 H(+)</text>
        <dbReference type="Rhea" id="RHEA:18633"/>
        <dbReference type="ChEBI" id="CHEBI:15377"/>
        <dbReference type="ChEBI" id="CHEBI:15378"/>
        <dbReference type="ChEBI" id="CHEBI:17544"/>
        <dbReference type="ChEBI" id="CHEBI:29985"/>
        <dbReference type="ChEBI" id="CHEBI:30616"/>
        <dbReference type="ChEBI" id="CHEBI:43474"/>
        <dbReference type="ChEBI" id="CHEBI:58228"/>
        <dbReference type="ChEBI" id="CHEBI:58359"/>
        <dbReference type="ChEBI" id="CHEBI:456216"/>
        <dbReference type="EC" id="6.3.5.5"/>
    </reaction>
</comment>
<comment type="catalytic activity">
    <molecule>Carbamoyl phosphate synthase arginine-specific small chain</molecule>
    <reaction evidence="1">
        <text>L-glutamine + H2O = L-glutamate + NH4(+)</text>
        <dbReference type="Rhea" id="RHEA:15889"/>
        <dbReference type="ChEBI" id="CHEBI:15377"/>
        <dbReference type="ChEBI" id="CHEBI:28938"/>
        <dbReference type="ChEBI" id="CHEBI:29985"/>
        <dbReference type="ChEBI" id="CHEBI:58359"/>
    </reaction>
</comment>
<comment type="pathway">
    <text evidence="1">Amino-acid biosynthesis; L-arginine biosynthesis; carbamoyl phosphate from bicarbonate: step 1/1.</text>
</comment>
<comment type="subunit">
    <text evidence="1">Heterodimer composed of 2 chains; the small (or glutamine) chain promotes the hydrolysis of glutamine to ammonia, which is used by the large (or ammonia) chain to synthesize carbamoyl phosphate.</text>
</comment>
<comment type="subcellular location">
    <subcellularLocation>
        <location evidence="1">Mitochondrion matrix</location>
    </subcellularLocation>
</comment>
<comment type="similarity">
    <text evidence="4">Belongs to the CarA family.</text>
</comment>